<proteinExistence type="evidence at protein level"/>
<feature type="initiator methionine" description="Removed" evidence="2">
    <location>
        <position position="1"/>
    </location>
</feature>
<feature type="chain" id="PRO_0000071484" description="Protein phosphatase inhibitor 2">
    <location>
        <begin position="2"/>
        <end position="205"/>
    </location>
</feature>
<feature type="region of interest" description="Disordered" evidence="5">
    <location>
        <begin position="1"/>
        <end position="44"/>
    </location>
</feature>
<feature type="region of interest" description="Required for binding PPP1CC" evidence="1">
    <location>
        <begin position="12"/>
        <end position="17"/>
    </location>
</feature>
<feature type="region of interest" description="Required for binding PPP1CC" evidence="1">
    <location>
        <begin position="43"/>
        <end position="55"/>
    </location>
</feature>
<feature type="region of interest" description="Disordered" evidence="5">
    <location>
        <begin position="104"/>
        <end position="142"/>
    </location>
</feature>
<feature type="region of interest" description="Required for binding PPP1CC catalytic center, displacing metal ions and inhibition of PPP1CC catalytic activity" evidence="1">
    <location>
        <begin position="147"/>
        <end position="150"/>
    </location>
</feature>
<feature type="region of interest" description="Disordered" evidence="5">
    <location>
        <begin position="163"/>
        <end position="205"/>
    </location>
</feature>
<feature type="compositionally biased region" description="Low complexity" evidence="5">
    <location>
        <begin position="19"/>
        <end position="29"/>
    </location>
</feature>
<feature type="compositionally biased region" description="Basic and acidic residues" evidence="5">
    <location>
        <begin position="31"/>
        <end position="44"/>
    </location>
</feature>
<feature type="compositionally biased region" description="Basic and acidic residues" evidence="5">
    <location>
        <begin position="110"/>
        <end position="120"/>
    </location>
</feature>
<feature type="compositionally biased region" description="Acidic residues" evidence="5">
    <location>
        <begin position="121"/>
        <end position="130"/>
    </location>
</feature>
<feature type="compositionally biased region" description="Basic and acidic residues" evidence="5">
    <location>
        <begin position="131"/>
        <end position="142"/>
    </location>
</feature>
<feature type="compositionally biased region" description="Acidic residues" evidence="5">
    <location>
        <begin position="167"/>
        <end position="179"/>
    </location>
</feature>
<feature type="modified residue" description="N-acetylalanine" evidence="2">
    <location>
        <position position="2"/>
    </location>
</feature>
<feature type="modified residue" description="Phosphoserine; by ATM" evidence="3">
    <location>
        <position position="44"/>
    </location>
</feature>
<feature type="modified residue" description="Phosphothreonine; by GSK3" evidence="2">
    <location>
        <position position="73"/>
    </location>
</feature>
<feature type="modified residue" description="Phosphoserine" evidence="3">
    <location>
        <position position="87"/>
    </location>
</feature>
<feature type="modified residue" description="Phosphoserine" evidence="4">
    <location>
        <position position="89"/>
    </location>
</feature>
<feature type="modified residue" description="Phosphothreonine" evidence="4">
    <location>
        <position position="96"/>
    </location>
</feature>
<feature type="modified residue" description="Phosphothreonine" evidence="4">
    <location>
        <position position="116"/>
    </location>
</feature>
<feature type="modified residue" description="Phosphoserine" evidence="7">
    <location>
        <position position="121"/>
    </location>
</feature>
<feature type="modified residue" description="Phosphoserine" evidence="7">
    <location>
        <position position="122"/>
    </location>
</feature>
<feature type="modified residue" description="Phosphoserine" evidence="7">
    <location>
        <position position="130"/>
    </location>
</feature>
<protein>
    <recommendedName>
        <fullName>Protein phosphatase inhibitor 2</fullName>
        <shortName>IPP-2</shortName>
    </recommendedName>
</protein>
<name>IPP2_RAT</name>
<sequence length="205" mass="23071">MAASTASHRPIKGILKNKTSTTSSVVASAEQPRRTVEEELSKKSQKWDEMNILATYHPADKDYGLMKIDEPDTPYHNMIGDDEDVCSDSEGNEVMTPEILAKKLAAAEGSEPKFRTREQESSGEEDNDLSPEEREKKRQFEMKRKLHYNEGLNIKLARQLISKDLHDDDEDEEMSETADADSMNIEESNQGSTAGDHLQHKSQSS</sequence>
<evidence type="ECO:0000250" key="1"/>
<evidence type="ECO:0000250" key="2">
    <source>
        <dbReference type="UniProtKB" id="P11845"/>
    </source>
</evidence>
<evidence type="ECO:0000250" key="3">
    <source>
        <dbReference type="UniProtKB" id="P41236"/>
    </source>
</evidence>
<evidence type="ECO:0000250" key="4">
    <source>
        <dbReference type="UniProtKB" id="Q9DCL8"/>
    </source>
</evidence>
<evidence type="ECO:0000256" key="5">
    <source>
        <dbReference type="SAM" id="MobiDB-lite"/>
    </source>
</evidence>
<evidence type="ECO:0000305" key="6"/>
<evidence type="ECO:0007744" key="7">
    <source>
    </source>
</evidence>
<reference key="1">
    <citation type="journal article" date="1995" name="J. Chem. Neuroanat.">
        <title>Molecular cloning of the cDNA for rat phosphatase inhibitor-2 and its wide gene expression in the central nervous system.</title>
        <authorList>
            <person name="Sakagami H."/>
            <person name="Kondo H."/>
        </authorList>
    </citation>
    <scope>NUCLEOTIDE SEQUENCE [MRNA]</scope>
    <source>
        <tissue>Brain</tissue>
    </source>
</reference>
<reference key="2">
    <citation type="journal article" date="2004" name="Genome Res.">
        <title>The status, quality, and expansion of the NIH full-length cDNA project: the Mammalian Gene Collection (MGC).</title>
        <authorList>
            <consortium name="The MGC Project Team"/>
        </authorList>
    </citation>
    <scope>NUCLEOTIDE SEQUENCE [LARGE SCALE MRNA]</scope>
    <source>
        <tissue>Brain</tissue>
    </source>
</reference>
<reference key="3">
    <citation type="journal article" date="2012" name="Nat. Commun.">
        <title>Quantitative maps of protein phosphorylation sites across 14 different rat organs and tissues.</title>
        <authorList>
            <person name="Lundby A."/>
            <person name="Secher A."/>
            <person name="Lage K."/>
            <person name="Nordsborg N.B."/>
            <person name="Dmytriyev A."/>
            <person name="Lundby C."/>
            <person name="Olsen J.V."/>
        </authorList>
    </citation>
    <scope>PHOSPHORYLATION [LARGE SCALE ANALYSIS] AT SER-121; SER-122 AND SER-130</scope>
    <scope>IDENTIFICATION BY MASS SPECTROMETRY [LARGE SCALE ANALYSIS]</scope>
</reference>
<gene>
    <name type="primary">Ppp1r2</name>
    <name type="synonym">Ipp2</name>
</gene>
<comment type="function">
    <text>Inhibitor of protein-phosphatase 1.</text>
</comment>
<comment type="subunit">
    <text evidence="1">Heterodimer with PP1.</text>
</comment>
<comment type="tissue specificity">
    <text>Central nervous system.</text>
</comment>
<comment type="PTM">
    <text evidence="1">Phosphorylation on Ser-44 by ATM activates PP1 by dissociating the PP1-PPP1R2 complex. Phosphorylation on Thr-73 by GSK3 activates PP1 by dissociating the PP1-PPP1R2 complex.</text>
</comment>
<comment type="similarity">
    <text evidence="6">Belongs to the protein phosphatase inhibitor 2 family.</text>
</comment>
<accession>P50411</accession>
<accession>Q56A32</accession>
<dbReference type="EMBL" id="S79213">
    <property type="protein sequence ID" value="AAB35244.1"/>
    <property type="molecule type" value="mRNA"/>
</dbReference>
<dbReference type="EMBL" id="BC092194">
    <property type="protein sequence ID" value="AAH92194.1"/>
    <property type="molecule type" value="mRNA"/>
</dbReference>
<dbReference type="RefSeq" id="NP_620178.1">
    <property type="nucleotide sequence ID" value="NM_138823.3"/>
</dbReference>
<dbReference type="SMR" id="P50411"/>
<dbReference type="ELM" id="P50411"/>
<dbReference type="FunCoup" id="P50411">
    <property type="interactions" value="1234"/>
</dbReference>
<dbReference type="STRING" id="10116.ENSRNOP00000002361"/>
<dbReference type="iPTMnet" id="P50411"/>
<dbReference type="PhosphoSitePlus" id="P50411"/>
<dbReference type="jPOST" id="P50411"/>
<dbReference type="PaxDb" id="10116-ENSRNOP00000002361"/>
<dbReference type="Ensembl" id="ENSRNOT00000002361.7">
    <property type="protein sequence ID" value="ENSRNOP00000002361.6"/>
    <property type="gene ID" value="ENSRNOG00000001733.8"/>
</dbReference>
<dbReference type="GeneID" id="192361"/>
<dbReference type="KEGG" id="rno:192361"/>
<dbReference type="UCSC" id="RGD:621099">
    <property type="organism name" value="rat"/>
</dbReference>
<dbReference type="AGR" id="RGD:621099"/>
<dbReference type="CTD" id="5504"/>
<dbReference type="RGD" id="621099">
    <property type="gene designation" value="Ppp1r2"/>
</dbReference>
<dbReference type="eggNOG" id="KOG4041">
    <property type="taxonomic scope" value="Eukaryota"/>
</dbReference>
<dbReference type="GeneTree" id="ENSGT00390000004757"/>
<dbReference type="HOGENOM" id="CLU_084310_2_0_1"/>
<dbReference type="InParanoid" id="P50411"/>
<dbReference type="OMA" id="RAHYNEG"/>
<dbReference type="OrthoDB" id="551302at2759"/>
<dbReference type="PhylomeDB" id="P50411"/>
<dbReference type="TreeFam" id="TF105536"/>
<dbReference type="PRO" id="PR:P50411"/>
<dbReference type="Proteomes" id="UP000002494">
    <property type="component" value="Chromosome 11"/>
</dbReference>
<dbReference type="GO" id="GO:0043197">
    <property type="term" value="C:dendritic spine"/>
    <property type="evidence" value="ECO:0000314"/>
    <property type="project" value="RGD"/>
</dbReference>
<dbReference type="GO" id="GO:0030426">
    <property type="term" value="C:growth cone"/>
    <property type="evidence" value="ECO:0000314"/>
    <property type="project" value="RGD"/>
</dbReference>
<dbReference type="GO" id="GO:0140678">
    <property type="term" value="F:molecular function inhibitor activity"/>
    <property type="evidence" value="ECO:0000266"/>
    <property type="project" value="RGD"/>
</dbReference>
<dbReference type="GO" id="GO:0019904">
    <property type="term" value="F:protein domain specific binding"/>
    <property type="evidence" value="ECO:0000353"/>
    <property type="project" value="RGD"/>
</dbReference>
<dbReference type="GO" id="GO:0004864">
    <property type="term" value="F:protein phosphatase inhibitor activity"/>
    <property type="evidence" value="ECO:0000318"/>
    <property type="project" value="GO_Central"/>
</dbReference>
<dbReference type="GO" id="GO:0005977">
    <property type="term" value="P:glycogen metabolic process"/>
    <property type="evidence" value="ECO:0007669"/>
    <property type="project" value="UniProtKB-KW"/>
</dbReference>
<dbReference type="GO" id="GO:0035556">
    <property type="term" value="P:intracellular signal transduction"/>
    <property type="evidence" value="ECO:0000318"/>
    <property type="project" value="GO_Central"/>
</dbReference>
<dbReference type="GO" id="GO:0009966">
    <property type="term" value="P:regulation of signal transduction"/>
    <property type="evidence" value="ECO:0007669"/>
    <property type="project" value="InterPro"/>
</dbReference>
<dbReference type="Gene3D" id="6.10.250.1050">
    <property type="match status" value="2"/>
</dbReference>
<dbReference type="InterPro" id="IPR007062">
    <property type="entry name" value="PPI-2"/>
</dbReference>
<dbReference type="PANTHER" id="PTHR12398">
    <property type="entry name" value="PROTEIN PHOSPHATASE INHIBITOR"/>
    <property type="match status" value="1"/>
</dbReference>
<dbReference type="PANTHER" id="PTHR12398:SF35">
    <property type="entry name" value="PROTEIN PHOSPHATASE INHIBITOR 2-RELATED"/>
    <property type="match status" value="1"/>
</dbReference>
<dbReference type="Pfam" id="PF04979">
    <property type="entry name" value="IPP-2"/>
    <property type="match status" value="1"/>
</dbReference>
<organism>
    <name type="scientific">Rattus norvegicus</name>
    <name type="common">Rat</name>
    <dbReference type="NCBI Taxonomy" id="10116"/>
    <lineage>
        <taxon>Eukaryota</taxon>
        <taxon>Metazoa</taxon>
        <taxon>Chordata</taxon>
        <taxon>Craniata</taxon>
        <taxon>Vertebrata</taxon>
        <taxon>Euteleostomi</taxon>
        <taxon>Mammalia</taxon>
        <taxon>Eutheria</taxon>
        <taxon>Euarchontoglires</taxon>
        <taxon>Glires</taxon>
        <taxon>Rodentia</taxon>
        <taxon>Myomorpha</taxon>
        <taxon>Muroidea</taxon>
        <taxon>Muridae</taxon>
        <taxon>Murinae</taxon>
        <taxon>Rattus</taxon>
    </lineage>
</organism>
<keyword id="KW-0007">Acetylation</keyword>
<keyword id="KW-0119">Carbohydrate metabolism</keyword>
<keyword id="KW-0321">Glycogen metabolism</keyword>
<keyword id="KW-0597">Phosphoprotein</keyword>
<keyword id="KW-0650">Protein phosphatase inhibitor</keyword>
<keyword id="KW-1185">Reference proteome</keyword>